<reference key="1">
    <citation type="journal article" date="2007" name="PLoS Genet.">
        <title>Patterns and implications of gene gain and loss in the evolution of Prochlorococcus.</title>
        <authorList>
            <person name="Kettler G.C."/>
            <person name="Martiny A.C."/>
            <person name="Huang K."/>
            <person name="Zucker J."/>
            <person name="Coleman M.L."/>
            <person name="Rodrigue S."/>
            <person name="Chen F."/>
            <person name="Lapidus A."/>
            <person name="Ferriera S."/>
            <person name="Johnson J."/>
            <person name="Steglich C."/>
            <person name="Church G.M."/>
            <person name="Richardson P."/>
            <person name="Chisholm S.W."/>
        </authorList>
    </citation>
    <scope>NUCLEOTIDE SEQUENCE [LARGE SCALE GENOMIC DNA]</scope>
    <source>
        <strain>MIT 9301</strain>
    </source>
</reference>
<comment type="function">
    <text evidence="1">Catalyzes the ATP-dependent phosphorylation of L-homoserine to L-homoserine phosphate.</text>
</comment>
<comment type="catalytic activity">
    <reaction evidence="1">
        <text>L-homoserine + ATP = O-phospho-L-homoserine + ADP + H(+)</text>
        <dbReference type="Rhea" id="RHEA:13985"/>
        <dbReference type="ChEBI" id="CHEBI:15378"/>
        <dbReference type="ChEBI" id="CHEBI:30616"/>
        <dbReference type="ChEBI" id="CHEBI:57476"/>
        <dbReference type="ChEBI" id="CHEBI:57590"/>
        <dbReference type="ChEBI" id="CHEBI:456216"/>
        <dbReference type="EC" id="2.7.1.39"/>
    </reaction>
</comment>
<comment type="pathway">
    <text evidence="1">Amino-acid biosynthesis; L-threonine biosynthesis; L-threonine from L-aspartate: step 4/5.</text>
</comment>
<comment type="subcellular location">
    <subcellularLocation>
        <location evidence="1">Cytoplasm</location>
    </subcellularLocation>
</comment>
<comment type="similarity">
    <text evidence="1">Belongs to the GHMP kinase family. Homoserine kinase subfamily.</text>
</comment>
<feature type="chain" id="PRO_1000049155" description="Homoserine kinase">
    <location>
        <begin position="1"/>
        <end position="315"/>
    </location>
</feature>
<feature type="binding site" evidence="1">
    <location>
        <begin position="97"/>
        <end position="107"/>
    </location>
    <ligand>
        <name>ATP</name>
        <dbReference type="ChEBI" id="CHEBI:30616"/>
    </ligand>
</feature>
<protein>
    <recommendedName>
        <fullName evidence="1">Homoserine kinase</fullName>
        <shortName evidence="1">HK</shortName>
        <shortName evidence="1">HSK</shortName>
        <ecNumber evidence="1">2.7.1.39</ecNumber>
    </recommendedName>
</protein>
<proteinExistence type="inferred from homology"/>
<name>KHSE_PROM0</name>
<accession>A3PBW9</accession>
<gene>
    <name evidence="1" type="primary">thrB</name>
    <name type="ordered locus">P9301_06211</name>
</gene>
<evidence type="ECO:0000255" key="1">
    <source>
        <dbReference type="HAMAP-Rule" id="MF_00384"/>
    </source>
</evidence>
<sequence length="315" mass="33579">MSIPEVGKKIRVTVPSTTANLGPGFDCLGAALDLYNEFIFTRIEGGGDRFDLIMESTDGNHLRGGPENLVFRAAQKVWESANMDPFALEARVKLAVPPARGLGSSATAIVAGLIGANAIMNSPLSKEKLLELAIDIEGHPDNVVPSLLGGLCLTARSSSQRWRIIRCEWHYSIKAVVAIPAIRLSTSEARKVMPRNVPISDAVTNMGALTLLLNGLKTGNEELIKEGMFDKLHEPYRWKLIKGGLEVKDAALNAGALGCAISGAGPSILALCKKENGKNVSQAMVKAWEMSGVASRAPFLNVQTTGSQFSTISGK</sequence>
<organism>
    <name type="scientific">Prochlorococcus marinus (strain MIT 9301)</name>
    <dbReference type="NCBI Taxonomy" id="167546"/>
    <lineage>
        <taxon>Bacteria</taxon>
        <taxon>Bacillati</taxon>
        <taxon>Cyanobacteriota</taxon>
        <taxon>Cyanophyceae</taxon>
        <taxon>Synechococcales</taxon>
        <taxon>Prochlorococcaceae</taxon>
        <taxon>Prochlorococcus</taxon>
    </lineage>
</organism>
<keyword id="KW-0028">Amino-acid biosynthesis</keyword>
<keyword id="KW-0067">ATP-binding</keyword>
<keyword id="KW-0963">Cytoplasm</keyword>
<keyword id="KW-0418">Kinase</keyword>
<keyword id="KW-0547">Nucleotide-binding</keyword>
<keyword id="KW-1185">Reference proteome</keyword>
<keyword id="KW-0791">Threonine biosynthesis</keyword>
<keyword id="KW-0808">Transferase</keyword>
<dbReference type="EC" id="2.7.1.39" evidence="1"/>
<dbReference type="EMBL" id="CP000576">
    <property type="protein sequence ID" value="ABO17244.1"/>
    <property type="molecule type" value="Genomic_DNA"/>
</dbReference>
<dbReference type="RefSeq" id="WP_011862611.1">
    <property type="nucleotide sequence ID" value="NC_009091.1"/>
</dbReference>
<dbReference type="SMR" id="A3PBW9"/>
<dbReference type="STRING" id="167546.P9301_06211"/>
<dbReference type="KEGG" id="pmg:P9301_06211"/>
<dbReference type="eggNOG" id="COG0083">
    <property type="taxonomic scope" value="Bacteria"/>
</dbReference>
<dbReference type="HOGENOM" id="CLU_041243_0_2_3"/>
<dbReference type="OrthoDB" id="9769912at2"/>
<dbReference type="UniPathway" id="UPA00050">
    <property type="reaction ID" value="UER00064"/>
</dbReference>
<dbReference type="Proteomes" id="UP000001430">
    <property type="component" value="Chromosome"/>
</dbReference>
<dbReference type="GO" id="GO:0005737">
    <property type="term" value="C:cytoplasm"/>
    <property type="evidence" value="ECO:0007669"/>
    <property type="project" value="UniProtKB-SubCell"/>
</dbReference>
<dbReference type="GO" id="GO:0005524">
    <property type="term" value="F:ATP binding"/>
    <property type="evidence" value="ECO:0007669"/>
    <property type="project" value="UniProtKB-UniRule"/>
</dbReference>
<dbReference type="GO" id="GO:0004413">
    <property type="term" value="F:homoserine kinase activity"/>
    <property type="evidence" value="ECO:0007669"/>
    <property type="project" value="UniProtKB-UniRule"/>
</dbReference>
<dbReference type="GO" id="GO:0009088">
    <property type="term" value="P:threonine biosynthetic process"/>
    <property type="evidence" value="ECO:0007669"/>
    <property type="project" value="UniProtKB-UniRule"/>
</dbReference>
<dbReference type="Gene3D" id="3.30.230.10">
    <property type="match status" value="1"/>
</dbReference>
<dbReference type="Gene3D" id="3.30.70.890">
    <property type="entry name" value="GHMP kinase, C-terminal domain"/>
    <property type="match status" value="1"/>
</dbReference>
<dbReference type="HAMAP" id="MF_00384">
    <property type="entry name" value="Homoser_kinase"/>
    <property type="match status" value="1"/>
</dbReference>
<dbReference type="InterPro" id="IPR013750">
    <property type="entry name" value="GHMP_kinase_C_dom"/>
</dbReference>
<dbReference type="InterPro" id="IPR036554">
    <property type="entry name" value="GHMP_kinase_C_sf"/>
</dbReference>
<dbReference type="InterPro" id="IPR006204">
    <property type="entry name" value="GHMP_kinase_N_dom"/>
</dbReference>
<dbReference type="InterPro" id="IPR006203">
    <property type="entry name" value="GHMP_knse_ATP-bd_CS"/>
</dbReference>
<dbReference type="InterPro" id="IPR000870">
    <property type="entry name" value="Homoserine_kinase"/>
</dbReference>
<dbReference type="InterPro" id="IPR020568">
    <property type="entry name" value="Ribosomal_Su5_D2-typ_SF"/>
</dbReference>
<dbReference type="InterPro" id="IPR014721">
    <property type="entry name" value="Ribsml_uS5_D2-typ_fold_subgr"/>
</dbReference>
<dbReference type="NCBIfam" id="NF002288">
    <property type="entry name" value="PRK01212.1-4"/>
    <property type="match status" value="1"/>
</dbReference>
<dbReference type="NCBIfam" id="TIGR00191">
    <property type="entry name" value="thrB"/>
    <property type="match status" value="1"/>
</dbReference>
<dbReference type="PANTHER" id="PTHR20861:SF1">
    <property type="entry name" value="HOMOSERINE KINASE"/>
    <property type="match status" value="1"/>
</dbReference>
<dbReference type="PANTHER" id="PTHR20861">
    <property type="entry name" value="HOMOSERINE/4-DIPHOSPHOCYTIDYL-2-C-METHYL-D-ERYTHRITOL KINASE"/>
    <property type="match status" value="1"/>
</dbReference>
<dbReference type="Pfam" id="PF08544">
    <property type="entry name" value="GHMP_kinases_C"/>
    <property type="match status" value="1"/>
</dbReference>
<dbReference type="Pfam" id="PF00288">
    <property type="entry name" value="GHMP_kinases_N"/>
    <property type="match status" value="1"/>
</dbReference>
<dbReference type="PIRSF" id="PIRSF000676">
    <property type="entry name" value="Homoser_kin"/>
    <property type="match status" value="1"/>
</dbReference>
<dbReference type="PRINTS" id="PR00958">
    <property type="entry name" value="HOMSERKINASE"/>
</dbReference>
<dbReference type="SUPFAM" id="SSF55060">
    <property type="entry name" value="GHMP Kinase, C-terminal domain"/>
    <property type="match status" value="1"/>
</dbReference>
<dbReference type="SUPFAM" id="SSF54211">
    <property type="entry name" value="Ribosomal protein S5 domain 2-like"/>
    <property type="match status" value="1"/>
</dbReference>
<dbReference type="PROSITE" id="PS00627">
    <property type="entry name" value="GHMP_KINASES_ATP"/>
    <property type="match status" value="1"/>
</dbReference>